<protein>
    <recommendedName>
        <fullName evidence="5">Equilibrative nucleoside transporter 3</fullName>
        <shortName evidence="5">mENT3</shortName>
    </recommendedName>
    <alternativeName>
        <fullName evidence="1">Solute carrier family 29 member 3</fullName>
    </alternativeName>
</protein>
<sequence>MAFASEDNVYHSSNAVYRAPSNHQEADQEALLGKLLDYPAPGLQRPEDRFNGAYIIFFCLGIGGLLPWNFFVTAKEYWAYKLRNCSSPASGEDPEDMDILNYFESYLAVASTVPSLLFLVANFLLVNRVQVHVRVLASLSVSLAIFVVMIVLVKVDTSSWTRGFFSLTIACMAIISSSSTIFNSSVYGLTGSFPMRNAQALISGGAMGGTVSAVALLVDLAASSDVRDSTLAFFLMAAVFLGLCMGLYLLLSQLEYARYYMRPVAPVRVFSGEDNPSQDAPSASSVAPASRVMHTPPLGPILKKTASLGFCAVSLYFVTAFIIPAISTNIQSMHKGTGSPWTSKFFVPLTVFLLFNFADLCGRQVTAWIQVPGPRSKLLPGLVVSRFCLVPLFLLCNYQPRSHLTKVLFQSDIYPVLFTCLLGLSNGYLSTLVLIYGPKIVPRELAEATSVVMLFYMSVGLMLGSACAALLEHFI</sequence>
<gene>
    <name evidence="7" type="primary">Slc29a3</name>
    <name type="synonym">Ent3</name>
</gene>
<keyword id="KW-1003">Cell membrane</keyword>
<keyword id="KW-0967">Endosome</keyword>
<keyword id="KW-0325">Glycoprotein</keyword>
<keyword id="KW-0458">Lysosome</keyword>
<keyword id="KW-0472">Membrane</keyword>
<keyword id="KW-0496">Mitochondrion</keyword>
<keyword id="KW-0597">Phosphoprotein</keyword>
<keyword id="KW-1185">Reference proteome</keyword>
<keyword id="KW-0812">Transmembrane</keyword>
<keyword id="KW-1133">Transmembrane helix</keyword>
<keyword id="KW-0813">Transport</keyword>
<organism>
    <name type="scientific">Mus musculus</name>
    <name type="common">Mouse</name>
    <dbReference type="NCBI Taxonomy" id="10090"/>
    <lineage>
        <taxon>Eukaryota</taxon>
        <taxon>Metazoa</taxon>
        <taxon>Chordata</taxon>
        <taxon>Craniata</taxon>
        <taxon>Vertebrata</taxon>
        <taxon>Euteleostomi</taxon>
        <taxon>Mammalia</taxon>
        <taxon>Eutheria</taxon>
        <taxon>Euarchontoglires</taxon>
        <taxon>Glires</taxon>
        <taxon>Rodentia</taxon>
        <taxon>Myomorpha</taxon>
        <taxon>Muroidea</taxon>
        <taxon>Muridae</taxon>
        <taxon>Murinae</taxon>
        <taxon>Mus</taxon>
        <taxon>Mus</taxon>
    </lineage>
</organism>
<dbReference type="EMBL" id="AF326986">
    <property type="protein sequence ID" value="AAK00957.1"/>
    <property type="molecule type" value="mRNA"/>
</dbReference>
<dbReference type="EMBL" id="AK034133">
    <property type="protein sequence ID" value="BAC28600.1"/>
    <property type="molecule type" value="mRNA"/>
</dbReference>
<dbReference type="EMBL" id="CH466553">
    <property type="protein sequence ID" value="EDL32166.1"/>
    <property type="molecule type" value="Genomic_DNA"/>
</dbReference>
<dbReference type="EMBL" id="BC137864">
    <property type="protein sequence ID" value="AAI37865.1"/>
    <property type="molecule type" value="mRNA"/>
</dbReference>
<dbReference type="CCDS" id="CCDS48571.1"/>
<dbReference type="RefSeq" id="NP_076085.1">
    <property type="nucleotide sequence ID" value="NM_023596.3"/>
</dbReference>
<dbReference type="SMR" id="Q99P65"/>
<dbReference type="BioGRID" id="214599">
    <property type="interactions" value="1"/>
</dbReference>
<dbReference type="FunCoup" id="Q99P65">
    <property type="interactions" value="525"/>
</dbReference>
<dbReference type="STRING" id="10090.ENSMUSP00000112685"/>
<dbReference type="GlyCosmos" id="Q99P65">
    <property type="glycosylation" value="1 site, No reported glycans"/>
</dbReference>
<dbReference type="GlyGen" id="Q99P65">
    <property type="glycosylation" value="1 site"/>
</dbReference>
<dbReference type="iPTMnet" id="Q99P65"/>
<dbReference type="PhosphoSitePlus" id="Q99P65"/>
<dbReference type="PaxDb" id="10090-ENSMUSP00000112685"/>
<dbReference type="PeptideAtlas" id="Q99P65"/>
<dbReference type="ProteomicsDB" id="260902"/>
<dbReference type="Pumba" id="Q99P65"/>
<dbReference type="Antibodypedia" id="68472">
    <property type="antibodies" value="114 antibodies from 20 providers"/>
</dbReference>
<dbReference type="DNASU" id="71279"/>
<dbReference type="Ensembl" id="ENSMUST00000117513.8">
    <property type="protein sequence ID" value="ENSMUSP00000112685.2"/>
    <property type="gene ID" value="ENSMUSG00000020100.16"/>
</dbReference>
<dbReference type="GeneID" id="71279"/>
<dbReference type="KEGG" id="mmu:71279"/>
<dbReference type="UCSC" id="uc007ffb.1">
    <property type="organism name" value="mouse"/>
</dbReference>
<dbReference type="AGR" id="MGI:1918529"/>
<dbReference type="CTD" id="55315"/>
<dbReference type="MGI" id="MGI:1918529">
    <property type="gene designation" value="Slc29a3"/>
</dbReference>
<dbReference type="VEuPathDB" id="HostDB:ENSMUSG00000020100"/>
<dbReference type="eggNOG" id="KOG1479">
    <property type="taxonomic scope" value="Eukaryota"/>
</dbReference>
<dbReference type="GeneTree" id="ENSGT00950000182898"/>
<dbReference type="HOGENOM" id="CLU_021611_6_1_1"/>
<dbReference type="InParanoid" id="Q99P65"/>
<dbReference type="OMA" id="GSPWTTK"/>
<dbReference type="OrthoDB" id="46396at2759"/>
<dbReference type="PhylomeDB" id="Q99P65"/>
<dbReference type="TreeFam" id="TF313950"/>
<dbReference type="Reactome" id="R-MMU-83936">
    <property type="pathway name" value="Transport of nucleosides and free purine and pyrimidine bases across the plasma membrane"/>
</dbReference>
<dbReference type="Reactome" id="R-MMU-9755088">
    <property type="pathway name" value="Ribavirin ADME"/>
</dbReference>
<dbReference type="BioGRID-ORCS" id="71279">
    <property type="hits" value="4 hits in 78 CRISPR screens"/>
</dbReference>
<dbReference type="PRO" id="PR:Q99P65"/>
<dbReference type="Proteomes" id="UP000000589">
    <property type="component" value="Chromosome 10"/>
</dbReference>
<dbReference type="RNAct" id="Q99P65">
    <property type="molecule type" value="protein"/>
</dbReference>
<dbReference type="Bgee" id="ENSMUSG00000020100">
    <property type="expression patterns" value="Expressed in right kidney and 213 other cell types or tissues"/>
</dbReference>
<dbReference type="ExpressionAtlas" id="Q99P65">
    <property type="expression patterns" value="baseline and differential"/>
</dbReference>
<dbReference type="GO" id="GO:0005794">
    <property type="term" value="C:Golgi apparatus"/>
    <property type="evidence" value="ECO:0007669"/>
    <property type="project" value="Ensembl"/>
</dbReference>
<dbReference type="GO" id="GO:0031902">
    <property type="term" value="C:late endosome membrane"/>
    <property type="evidence" value="ECO:0000250"/>
    <property type="project" value="UniProtKB"/>
</dbReference>
<dbReference type="GO" id="GO:0005765">
    <property type="term" value="C:lysosomal membrane"/>
    <property type="evidence" value="ECO:0000250"/>
    <property type="project" value="UniProtKB"/>
</dbReference>
<dbReference type="GO" id="GO:0031966">
    <property type="term" value="C:mitochondrial membrane"/>
    <property type="evidence" value="ECO:0007669"/>
    <property type="project" value="UniProtKB-SubCell"/>
</dbReference>
<dbReference type="GO" id="GO:0005886">
    <property type="term" value="C:plasma membrane"/>
    <property type="evidence" value="ECO:0007669"/>
    <property type="project" value="UniProtKB-SubCell"/>
</dbReference>
<dbReference type="GO" id="GO:0015212">
    <property type="term" value="F:cytidine transmembrane transporter activity"/>
    <property type="evidence" value="ECO:0000250"/>
    <property type="project" value="UniProtKB"/>
</dbReference>
<dbReference type="GO" id="GO:0015208">
    <property type="term" value="F:guanine transmembrane transporter activity"/>
    <property type="evidence" value="ECO:0000250"/>
    <property type="project" value="UniProtKB"/>
</dbReference>
<dbReference type="GO" id="GO:0008504">
    <property type="term" value="F:monoamine transmembrane transporter activity"/>
    <property type="evidence" value="ECO:0000250"/>
    <property type="project" value="UniProtKB"/>
</dbReference>
<dbReference type="GO" id="GO:0005326">
    <property type="term" value="F:neurotransmitter transmembrane transporter activity"/>
    <property type="evidence" value="ECO:0000250"/>
    <property type="project" value="UniProtKB"/>
</dbReference>
<dbReference type="GO" id="GO:0015205">
    <property type="term" value="F:nucleobase transmembrane transporter activity"/>
    <property type="evidence" value="ECO:0000250"/>
    <property type="project" value="UniProtKB"/>
</dbReference>
<dbReference type="GO" id="GO:0005337">
    <property type="term" value="F:nucleoside transmembrane transporter activity"/>
    <property type="evidence" value="ECO:0000315"/>
    <property type="project" value="UniProtKB"/>
</dbReference>
<dbReference type="GO" id="GO:0015101">
    <property type="term" value="F:organic cation transmembrane transporter activity"/>
    <property type="evidence" value="ECO:0000250"/>
    <property type="project" value="UniProtKB"/>
</dbReference>
<dbReference type="GO" id="GO:0015210">
    <property type="term" value="F:uracil transmembrane transporter activity"/>
    <property type="evidence" value="ECO:0000250"/>
    <property type="project" value="UniProtKB"/>
</dbReference>
<dbReference type="GO" id="GO:0015213">
    <property type="term" value="F:uridine transmembrane transporter activity"/>
    <property type="evidence" value="ECO:0000250"/>
    <property type="project" value="UniProtKB"/>
</dbReference>
<dbReference type="GO" id="GO:0032238">
    <property type="term" value="P:adenosine transport"/>
    <property type="evidence" value="ECO:0000315"/>
    <property type="project" value="UniProtKB"/>
</dbReference>
<dbReference type="GO" id="GO:0015861">
    <property type="term" value="P:cytidine transport"/>
    <property type="evidence" value="ECO:0000250"/>
    <property type="project" value="UniProtKB"/>
</dbReference>
<dbReference type="GO" id="GO:0015872">
    <property type="term" value="P:dopamine transport"/>
    <property type="evidence" value="ECO:0000250"/>
    <property type="project" value="UniProtKB"/>
</dbReference>
<dbReference type="GO" id="GO:1903716">
    <property type="term" value="P:guanine transmembrane transport"/>
    <property type="evidence" value="ECO:0000250"/>
    <property type="project" value="UniProtKB"/>
</dbReference>
<dbReference type="GO" id="GO:0035340">
    <property type="term" value="P:inosine transport"/>
    <property type="evidence" value="ECO:0000250"/>
    <property type="project" value="UniProtKB"/>
</dbReference>
<dbReference type="GO" id="GO:0015874">
    <property type="term" value="P:norepinephrine transport"/>
    <property type="evidence" value="ECO:0000250"/>
    <property type="project" value="UniProtKB"/>
</dbReference>
<dbReference type="GO" id="GO:0015851">
    <property type="term" value="P:nucleobase transport"/>
    <property type="evidence" value="ECO:0000250"/>
    <property type="project" value="UniProtKB"/>
</dbReference>
<dbReference type="GO" id="GO:1901642">
    <property type="term" value="P:nucleoside transmembrane transport"/>
    <property type="evidence" value="ECO:0000315"/>
    <property type="project" value="UniProtKB"/>
</dbReference>
<dbReference type="GO" id="GO:0015858">
    <property type="term" value="P:nucleoside transport"/>
    <property type="evidence" value="ECO:0000315"/>
    <property type="project" value="UniProtKB"/>
</dbReference>
<dbReference type="GO" id="GO:1904823">
    <property type="term" value="P:purine nucleobase transmembrane transport"/>
    <property type="evidence" value="ECO:0000250"/>
    <property type="project" value="UniProtKB"/>
</dbReference>
<dbReference type="GO" id="GO:1904082">
    <property type="term" value="P:pyrimidine nucleobase transmembrane transport"/>
    <property type="evidence" value="ECO:0000250"/>
    <property type="project" value="UniProtKB"/>
</dbReference>
<dbReference type="GO" id="GO:0006837">
    <property type="term" value="P:serotonin transport"/>
    <property type="evidence" value="ECO:0000250"/>
    <property type="project" value="UniProtKB"/>
</dbReference>
<dbReference type="GO" id="GO:1903791">
    <property type="term" value="P:uracil transmembrane transport"/>
    <property type="evidence" value="ECO:0000250"/>
    <property type="project" value="UniProtKB"/>
</dbReference>
<dbReference type="GO" id="GO:0015862">
    <property type="term" value="P:uridine transmembrane transport"/>
    <property type="evidence" value="ECO:0000250"/>
    <property type="project" value="UniProtKB"/>
</dbReference>
<dbReference type="InterPro" id="IPR002259">
    <property type="entry name" value="Eqnu_transpt"/>
</dbReference>
<dbReference type="PANTHER" id="PTHR10332">
    <property type="entry name" value="EQUILIBRATIVE NUCLEOSIDE TRANSPORTER"/>
    <property type="match status" value="1"/>
</dbReference>
<dbReference type="PANTHER" id="PTHR10332:SF17">
    <property type="entry name" value="EQUILIBRATIVE NUCLEOSIDE TRANSPORTER 3"/>
    <property type="match status" value="1"/>
</dbReference>
<dbReference type="Pfam" id="PF01733">
    <property type="entry name" value="Nucleoside_tran"/>
    <property type="match status" value="1"/>
</dbReference>
<dbReference type="PIRSF" id="PIRSF016379">
    <property type="entry name" value="ENT"/>
    <property type="match status" value="1"/>
</dbReference>
<dbReference type="PRINTS" id="PR01130">
    <property type="entry name" value="DERENTRNSPRT"/>
</dbReference>
<name>S29A3_MOUSE</name>
<reference key="1">
    <citation type="journal article" date="2001" name="Mol. Membr. Biol.">
        <title>The ENT family of eukaryote nucleoside and nucleobase transporters: recent advances in the investigation of structure/function relationships and the identification of novel isoforms.</title>
        <authorList>
            <person name="Hyde R.J."/>
            <person name="Cass C.E."/>
            <person name="Young J.D."/>
            <person name="Baldwin S.A."/>
        </authorList>
    </citation>
    <scope>NUCLEOTIDE SEQUENCE [MRNA]</scope>
    <source>
        <strain>C57BL/6J</strain>
    </source>
</reference>
<reference key="2">
    <citation type="journal article" date="2005" name="Science">
        <title>The transcriptional landscape of the mammalian genome.</title>
        <authorList>
            <person name="Carninci P."/>
            <person name="Kasukawa T."/>
            <person name="Katayama S."/>
            <person name="Gough J."/>
            <person name="Frith M.C."/>
            <person name="Maeda N."/>
            <person name="Oyama R."/>
            <person name="Ravasi T."/>
            <person name="Lenhard B."/>
            <person name="Wells C."/>
            <person name="Kodzius R."/>
            <person name="Shimokawa K."/>
            <person name="Bajic V.B."/>
            <person name="Brenner S.E."/>
            <person name="Batalov S."/>
            <person name="Forrest A.R."/>
            <person name="Zavolan M."/>
            <person name="Davis M.J."/>
            <person name="Wilming L.G."/>
            <person name="Aidinis V."/>
            <person name="Allen J.E."/>
            <person name="Ambesi-Impiombato A."/>
            <person name="Apweiler R."/>
            <person name="Aturaliya R.N."/>
            <person name="Bailey T.L."/>
            <person name="Bansal M."/>
            <person name="Baxter L."/>
            <person name="Beisel K.W."/>
            <person name="Bersano T."/>
            <person name="Bono H."/>
            <person name="Chalk A.M."/>
            <person name="Chiu K.P."/>
            <person name="Choudhary V."/>
            <person name="Christoffels A."/>
            <person name="Clutterbuck D.R."/>
            <person name="Crowe M.L."/>
            <person name="Dalla E."/>
            <person name="Dalrymple B.P."/>
            <person name="de Bono B."/>
            <person name="Della Gatta G."/>
            <person name="di Bernardo D."/>
            <person name="Down T."/>
            <person name="Engstrom P."/>
            <person name="Fagiolini M."/>
            <person name="Faulkner G."/>
            <person name="Fletcher C.F."/>
            <person name="Fukushima T."/>
            <person name="Furuno M."/>
            <person name="Futaki S."/>
            <person name="Gariboldi M."/>
            <person name="Georgii-Hemming P."/>
            <person name="Gingeras T.R."/>
            <person name="Gojobori T."/>
            <person name="Green R.E."/>
            <person name="Gustincich S."/>
            <person name="Harbers M."/>
            <person name="Hayashi Y."/>
            <person name="Hensch T.K."/>
            <person name="Hirokawa N."/>
            <person name="Hill D."/>
            <person name="Huminiecki L."/>
            <person name="Iacono M."/>
            <person name="Ikeo K."/>
            <person name="Iwama A."/>
            <person name="Ishikawa T."/>
            <person name="Jakt M."/>
            <person name="Kanapin A."/>
            <person name="Katoh M."/>
            <person name="Kawasawa Y."/>
            <person name="Kelso J."/>
            <person name="Kitamura H."/>
            <person name="Kitano H."/>
            <person name="Kollias G."/>
            <person name="Krishnan S.P."/>
            <person name="Kruger A."/>
            <person name="Kummerfeld S.K."/>
            <person name="Kurochkin I.V."/>
            <person name="Lareau L.F."/>
            <person name="Lazarevic D."/>
            <person name="Lipovich L."/>
            <person name="Liu J."/>
            <person name="Liuni S."/>
            <person name="McWilliam S."/>
            <person name="Madan Babu M."/>
            <person name="Madera M."/>
            <person name="Marchionni L."/>
            <person name="Matsuda H."/>
            <person name="Matsuzawa S."/>
            <person name="Miki H."/>
            <person name="Mignone F."/>
            <person name="Miyake S."/>
            <person name="Morris K."/>
            <person name="Mottagui-Tabar S."/>
            <person name="Mulder N."/>
            <person name="Nakano N."/>
            <person name="Nakauchi H."/>
            <person name="Ng P."/>
            <person name="Nilsson R."/>
            <person name="Nishiguchi S."/>
            <person name="Nishikawa S."/>
            <person name="Nori F."/>
            <person name="Ohara O."/>
            <person name="Okazaki Y."/>
            <person name="Orlando V."/>
            <person name="Pang K.C."/>
            <person name="Pavan W.J."/>
            <person name="Pavesi G."/>
            <person name="Pesole G."/>
            <person name="Petrovsky N."/>
            <person name="Piazza S."/>
            <person name="Reed J."/>
            <person name="Reid J.F."/>
            <person name="Ring B.Z."/>
            <person name="Ringwald M."/>
            <person name="Rost B."/>
            <person name="Ruan Y."/>
            <person name="Salzberg S.L."/>
            <person name="Sandelin A."/>
            <person name="Schneider C."/>
            <person name="Schoenbach C."/>
            <person name="Sekiguchi K."/>
            <person name="Semple C.A."/>
            <person name="Seno S."/>
            <person name="Sessa L."/>
            <person name="Sheng Y."/>
            <person name="Shibata Y."/>
            <person name="Shimada H."/>
            <person name="Shimada K."/>
            <person name="Silva D."/>
            <person name="Sinclair B."/>
            <person name="Sperling S."/>
            <person name="Stupka E."/>
            <person name="Sugiura K."/>
            <person name="Sultana R."/>
            <person name="Takenaka Y."/>
            <person name="Taki K."/>
            <person name="Tammoja K."/>
            <person name="Tan S.L."/>
            <person name="Tang S."/>
            <person name="Taylor M.S."/>
            <person name="Tegner J."/>
            <person name="Teichmann S.A."/>
            <person name="Ueda H.R."/>
            <person name="van Nimwegen E."/>
            <person name="Verardo R."/>
            <person name="Wei C.L."/>
            <person name="Yagi K."/>
            <person name="Yamanishi H."/>
            <person name="Zabarovsky E."/>
            <person name="Zhu S."/>
            <person name="Zimmer A."/>
            <person name="Hide W."/>
            <person name="Bult C."/>
            <person name="Grimmond S.M."/>
            <person name="Teasdale R.D."/>
            <person name="Liu E.T."/>
            <person name="Brusic V."/>
            <person name="Quackenbush J."/>
            <person name="Wahlestedt C."/>
            <person name="Mattick J.S."/>
            <person name="Hume D.A."/>
            <person name="Kai C."/>
            <person name="Sasaki D."/>
            <person name="Tomaru Y."/>
            <person name="Fukuda S."/>
            <person name="Kanamori-Katayama M."/>
            <person name="Suzuki M."/>
            <person name="Aoki J."/>
            <person name="Arakawa T."/>
            <person name="Iida J."/>
            <person name="Imamura K."/>
            <person name="Itoh M."/>
            <person name="Kato T."/>
            <person name="Kawaji H."/>
            <person name="Kawagashira N."/>
            <person name="Kawashima T."/>
            <person name="Kojima M."/>
            <person name="Kondo S."/>
            <person name="Konno H."/>
            <person name="Nakano K."/>
            <person name="Ninomiya N."/>
            <person name="Nishio T."/>
            <person name="Okada M."/>
            <person name="Plessy C."/>
            <person name="Shibata K."/>
            <person name="Shiraki T."/>
            <person name="Suzuki S."/>
            <person name="Tagami M."/>
            <person name="Waki K."/>
            <person name="Watahiki A."/>
            <person name="Okamura-Oho Y."/>
            <person name="Suzuki H."/>
            <person name="Kawai J."/>
            <person name="Hayashizaki Y."/>
        </authorList>
    </citation>
    <scope>NUCLEOTIDE SEQUENCE [LARGE SCALE MRNA]</scope>
    <source>
        <strain>C57BL/6J</strain>
        <tissue>Diencephalon</tissue>
    </source>
</reference>
<reference key="3">
    <citation type="submission" date="2005-09" db="EMBL/GenBank/DDBJ databases">
        <authorList>
            <person name="Mural R.J."/>
            <person name="Adams M.D."/>
            <person name="Myers E.W."/>
            <person name="Smith H.O."/>
            <person name="Venter J.C."/>
        </authorList>
    </citation>
    <scope>NUCLEOTIDE SEQUENCE [LARGE SCALE GENOMIC DNA]</scope>
</reference>
<reference key="4">
    <citation type="journal article" date="2004" name="Genome Res.">
        <title>The status, quality, and expansion of the NIH full-length cDNA project: the Mammalian Gene Collection (MGC).</title>
        <authorList>
            <consortium name="The MGC Project Team"/>
        </authorList>
    </citation>
    <scope>NUCLEOTIDE SEQUENCE [LARGE SCALE MRNA]</scope>
    <source>
        <tissue>Brain</tissue>
    </source>
</reference>
<reference key="5">
    <citation type="journal article" date="2005" name="J. Biol. Chem.">
        <title>Functional characterization of novel human and mouse equilibrative nucleoside transporters (hENT3 and mENT3) located in intracellular membranes.</title>
        <authorList>
            <person name="Baldwin S.A."/>
            <person name="Yao S.Y.M."/>
            <person name="Hyde R.J."/>
            <person name="Ng A.M.L."/>
            <person name="Foppolo S."/>
            <person name="Barnes K."/>
            <person name="Ritzel M.W.L."/>
            <person name="Cass C.E."/>
            <person name="Young J.D."/>
        </authorList>
    </citation>
    <scope>FUNCTION</scope>
    <scope>TRANSPORTER ACTIVITY</scope>
    <scope>MISCELLANEOUS</scope>
</reference>
<reference key="6">
    <citation type="journal article" date="2009" name="Immunity">
        <title>The phagosomal proteome in interferon-gamma-activated macrophages.</title>
        <authorList>
            <person name="Trost M."/>
            <person name="English L."/>
            <person name="Lemieux S."/>
            <person name="Courcelles M."/>
            <person name="Desjardins M."/>
            <person name="Thibault P."/>
        </authorList>
    </citation>
    <scope>PHOSPHORYLATION [LARGE SCALE ANALYSIS] AT SER-21</scope>
    <scope>IDENTIFICATION BY MASS SPECTROMETRY [LARGE SCALE ANALYSIS]</scope>
</reference>
<reference key="7">
    <citation type="journal article" date="2010" name="Cell">
        <title>A tissue-specific atlas of mouse protein phosphorylation and expression.</title>
        <authorList>
            <person name="Huttlin E.L."/>
            <person name="Jedrychowski M.P."/>
            <person name="Elias J.E."/>
            <person name="Goswami T."/>
            <person name="Rad R."/>
            <person name="Beausoleil S.A."/>
            <person name="Villen J."/>
            <person name="Haas W."/>
            <person name="Sowa M.E."/>
            <person name="Gygi S.P."/>
        </authorList>
    </citation>
    <scope>IDENTIFICATION BY MASS SPECTROMETRY [LARGE SCALE ANALYSIS]</scope>
    <source>
        <tissue>Kidney</tissue>
        <tissue>Spleen</tissue>
    </source>
</reference>
<reference key="8">
    <citation type="journal article" date="2012" name="Science">
        <title>Equilibrative nucleoside transporter 3 deficiency perturbs lysosome function and macrophage homeostasis.</title>
        <authorList>
            <person name="Hsu C.L."/>
            <person name="Lin W."/>
            <person name="Seshasayee D."/>
            <person name="Chen Y.H."/>
            <person name="Ding X."/>
            <person name="Lin Z."/>
            <person name="Suto E."/>
            <person name="Huang Z."/>
            <person name="Lee W.P."/>
            <person name="Park H."/>
            <person name="Xu M."/>
            <person name="Sun M."/>
            <person name="Rangell L."/>
            <person name="Lutman J.L."/>
            <person name="Ulufatu S."/>
            <person name="Stefanich E."/>
            <person name="Chalouni C."/>
            <person name="Sagolla M."/>
            <person name="Diehl L."/>
            <person name="Fielder P."/>
            <person name="Dean B."/>
            <person name="Balazs M."/>
            <person name="Martin F."/>
        </authorList>
    </citation>
    <scope>FUNCTION</scope>
    <scope>TRANSPORTER ACTIVITY</scope>
    <scope>TISSUE SPECIFICITY</scope>
    <scope>DISRUPTION PHENOTYPE</scope>
</reference>
<comment type="function">
    <text evidence="1 3 4">Uniporter that mediates the facilitative transport of nucleoside across lysosomal and mitochondrial membranes (PubMed:15701636, PubMed:22174130). Functions as a non-electrogenic Na(+)-independent transporter (PubMed:15701636). Substrate transport is pH-dependent and enhanced under acidic condition, probably reflecting the location of the transporter in acidic intracellular compartments (PubMed:15701636). Proton is not a cotransporting ion but most likely change the ionization state of the transporter which dictates transport-permissible/impermissible conformation for nucleoside translocation (By similarity). May direct the nucleoside transport from lysosomes to cytosol or cytosol to mitochondria to facilitate the fundamental function of salvage synthesis of nucleic acids (PubMed:22174130). Involved in the transport of nucleosides (adenosine, guanosine, uridine, thymidine, cytidine and inosine) and deoxynucleosides (deoxyadenosine, deoxycytidine) (PubMed:15701636, PubMed:22174130). Also mediates transport of purine nucleobases (adenine, guanine), and pyrimidine nucleobases (uracil) (PubMed:15701636). Also able to transport monoamine neurotransmitters dopamine, serotonin, noradrenaline and tyramine (By similarity). Capable of transporting ATP (By similarity). Mediates nucleoside export from lysosomes in macrophages, which regulates macrophage functions and numbers (PubMed:22174130).</text>
</comment>
<comment type="catalytic activity">
    <reaction evidence="3 4">
        <text>adenosine(in) = adenosine(out)</text>
        <dbReference type="Rhea" id="RHEA:75343"/>
        <dbReference type="ChEBI" id="CHEBI:16335"/>
    </reaction>
</comment>
<comment type="catalytic activity">
    <reaction evidence="1">
        <text>guanosine(in) = guanosine(out)</text>
        <dbReference type="Rhea" id="RHEA:75371"/>
        <dbReference type="ChEBI" id="CHEBI:16750"/>
    </reaction>
</comment>
<comment type="catalytic activity">
    <reaction evidence="1">
        <text>inosine(in) = inosine(out)</text>
        <dbReference type="Rhea" id="RHEA:75375"/>
        <dbReference type="ChEBI" id="CHEBI:17596"/>
    </reaction>
</comment>
<comment type="catalytic activity">
    <reaction evidence="1">
        <text>uridine(out) = uridine(in)</text>
        <dbReference type="Rhea" id="RHEA:71519"/>
        <dbReference type="ChEBI" id="CHEBI:16704"/>
    </reaction>
</comment>
<comment type="catalytic activity">
    <reaction evidence="1">
        <text>cytidine(in) = cytidine(out)</text>
        <dbReference type="Rhea" id="RHEA:75367"/>
        <dbReference type="ChEBI" id="CHEBI:17562"/>
    </reaction>
</comment>
<comment type="catalytic activity">
    <reaction evidence="1">
        <text>thymidine(in) = thymidine(out)</text>
        <dbReference type="Rhea" id="RHEA:75363"/>
        <dbReference type="ChEBI" id="CHEBI:17748"/>
    </reaction>
</comment>
<comment type="catalytic activity">
    <reaction evidence="1">
        <text>2'-deoxyadenosine(in) = 2'-deoxyadenosine(out)</text>
        <dbReference type="Rhea" id="RHEA:75691"/>
        <dbReference type="ChEBI" id="CHEBI:17256"/>
    </reaction>
</comment>
<comment type="catalytic activity">
    <reaction evidence="1">
        <text>2'-deoxycytidine(in) = 2'-deoxycytidine(out)</text>
        <dbReference type="Rhea" id="RHEA:75695"/>
        <dbReference type="ChEBI" id="CHEBI:15698"/>
    </reaction>
</comment>
<comment type="catalytic activity">
    <reaction evidence="1">
        <text>guanine(out) = guanine(in)</text>
        <dbReference type="Rhea" id="RHEA:71531"/>
        <dbReference type="ChEBI" id="CHEBI:16235"/>
    </reaction>
</comment>
<comment type="catalytic activity">
    <reaction evidence="1">
        <text>uracil(in) = uracil(out)</text>
        <dbReference type="Rhea" id="RHEA:69404"/>
        <dbReference type="ChEBI" id="CHEBI:17568"/>
    </reaction>
</comment>
<comment type="catalytic activity">
    <reaction evidence="1">
        <text>(R)-noradrenaline(out) = (R)-noradrenaline(in)</text>
        <dbReference type="Rhea" id="RHEA:73871"/>
        <dbReference type="ChEBI" id="CHEBI:72587"/>
    </reaction>
</comment>
<comment type="catalytic activity">
    <reaction evidence="1">
        <text>dopamine(out) = dopamine(in)</text>
        <dbReference type="Rhea" id="RHEA:73863"/>
        <dbReference type="ChEBI" id="CHEBI:59905"/>
    </reaction>
</comment>
<comment type="catalytic activity">
    <reaction evidence="1">
        <text>serotonin(out) = serotonin(in)</text>
        <dbReference type="Rhea" id="RHEA:73867"/>
        <dbReference type="ChEBI" id="CHEBI:350546"/>
    </reaction>
</comment>
<comment type="catalytic activity">
    <reaction evidence="1">
        <text>tyramine(in) = tyramine(out)</text>
        <dbReference type="Rhea" id="RHEA:74783"/>
        <dbReference type="ChEBI" id="CHEBI:327995"/>
    </reaction>
</comment>
<comment type="catalytic activity">
    <reaction evidence="1">
        <text>ATP(in) = ATP(out)</text>
        <dbReference type="Rhea" id="RHEA:75687"/>
        <dbReference type="ChEBI" id="CHEBI:30616"/>
    </reaction>
</comment>
<comment type="subcellular location">
    <subcellularLocation>
        <location evidence="1">Lysosome membrane</location>
        <topology evidence="6">Multi-pass membrane protein</topology>
    </subcellularLocation>
    <subcellularLocation>
        <location evidence="1">Late endosome membrane</location>
        <topology evidence="6">Multi-pass membrane protein</topology>
    </subcellularLocation>
    <subcellularLocation>
        <location evidence="1">Mitochondrion membrane</location>
        <topology evidence="6">Multi-pass membrane protein</topology>
    </subcellularLocation>
    <subcellularLocation>
        <location evidence="1">Cell membrane</location>
        <topology evidence="6">Multi-pass membrane protein</topology>
    </subcellularLocation>
</comment>
<comment type="tissue specificity">
    <text evidence="4">Expressed in macrophages.</text>
</comment>
<comment type="domain">
    <text evidence="3">Contains a N-terminal dileucine motif (DE)XXXL(LI) important for endosomal/lysosomal and mitochondrial subcellular localization.</text>
</comment>
<comment type="disruption phenotype">
    <text evidence="4">Knockout mice show lysosomal nucleoside buildup, elevated intralysosomal pH, altered macrophage function, and develop spontaneous and progressive macrophage-dominated histiocytosis.</text>
</comment>
<comment type="miscellaneous">
    <text evidence="3">A truncated version of SLC29A3/mENT3 in which the N-terminal 36 amino acids are deleted, enables cell-surface localization of an otherwise intracellular transporter, and is utilized to investigate the transporter activity.</text>
</comment>
<comment type="similarity">
    <text evidence="6">Belongs to the SLC29A/ENT transporter (TC 2.A.57) family.</text>
</comment>
<comment type="caution">
    <text evidence="3">In contrast with human ortholog, adenosine transport may be not pH-dependent.</text>
</comment>
<accession>Q99P65</accession>
<accession>B2RQD3</accession>
<feature type="chain" id="PRO_0000209344" description="Equilibrative nucleoside transporter 3">
    <location>
        <begin position="1"/>
        <end position="475"/>
    </location>
</feature>
<feature type="topological domain" description="Cytoplasmic" evidence="2">
    <location>
        <begin position="1"/>
        <end position="51"/>
    </location>
</feature>
<feature type="transmembrane region" description="Helical" evidence="2">
    <location>
        <begin position="52"/>
        <end position="72"/>
    </location>
</feature>
<feature type="topological domain" description="Extracellular" evidence="2">
    <location>
        <begin position="73"/>
        <end position="105"/>
    </location>
</feature>
<feature type="transmembrane region" description="Helical" evidence="2">
    <location>
        <begin position="106"/>
        <end position="126"/>
    </location>
</feature>
<feature type="topological domain" description="Cytoplasmic" evidence="2">
    <location>
        <begin position="127"/>
        <end position="134"/>
    </location>
</feature>
<feature type="transmembrane region" description="Helical" evidence="2">
    <location>
        <begin position="135"/>
        <end position="155"/>
    </location>
</feature>
<feature type="topological domain" description="Extracellular" evidence="2">
    <location>
        <begin position="156"/>
        <end position="162"/>
    </location>
</feature>
<feature type="transmembrane region" description="Helical" evidence="2">
    <location>
        <begin position="163"/>
        <end position="183"/>
    </location>
</feature>
<feature type="topological domain" description="Cytoplasmic" evidence="2">
    <location>
        <begin position="184"/>
        <end position="199"/>
    </location>
</feature>
<feature type="transmembrane region" description="Helical" evidence="2">
    <location>
        <begin position="200"/>
        <end position="220"/>
    </location>
</feature>
<feature type="topological domain" description="Extracellular" evidence="2">
    <location>
        <begin position="221"/>
        <end position="230"/>
    </location>
</feature>
<feature type="transmembrane region" description="Helical" evidence="2">
    <location>
        <begin position="231"/>
        <end position="251"/>
    </location>
</feature>
<feature type="topological domain" description="Cytoplasmic" evidence="2">
    <location>
        <begin position="252"/>
        <end position="305"/>
    </location>
</feature>
<feature type="transmembrane region" description="Helical" evidence="2">
    <location>
        <begin position="306"/>
        <end position="326"/>
    </location>
</feature>
<feature type="topological domain" description="Extracellular" evidence="2">
    <location>
        <begin position="327"/>
        <end position="340"/>
    </location>
</feature>
<feature type="transmembrane region" description="Helical" evidence="2">
    <location>
        <begin position="341"/>
        <end position="361"/>
    </location>
</feature>
<feature type="topological domain" description="Cytoplasmic" evidence="2">
    <location>
        <begin position="362"/>
        <end position="377"/>
    </location>
</feature>
<feature type="transmembrane region" description="Helical" evidence="2">
    <location>
        <begin position="378"/>
        <end position="398"/>
    </location>
</feature>
<feature type="topological domain" description="Extracellular" evidence="2">
    <location>
        <begin position="399"/>
        <end position="415"/>
    </location>
</feature>
<feature type="transmembrane region" description="Helical" evidence="2">
    <location>
        <begin position="416"/>
        <end position="436"/>
    </location>
</feature>
<feature type="topological domain" description="Cytoplasmic" evidence="2">
    <location>
        <begin position="437"/>
        <end position="450"/>
    </location>
</feature>
<feature type="transmembrane region" description="Helical" evidence="2">
    <location>
        <begin position="451"/>
        <end position="471"/>
    </location>
</feature>
<feature type="topological domain" description="Extracellular" evidence="2">
    <location>
        <begin position="472"/>
        <end position="475"/>
    </location>
</feature>
<feature type="short sequence motif" description="Dileucine internalization motif" evidence="1">
    <location>
        <begin position="31"/>
        <end position="32"/>
    </location>
</feature>
<feature type="site" description="Important for acidic pH-dependent nucleoside transporter activity. Acts as a pH sensor" evidence="1">
    <location>
        <position position="219"/>
    </location>
</feature>
<feature type="site" description="Important for acidic pH-dependent nucleoside transporter activity. Acts as a pH sensor" evidence="1">
    <location>
        <position position="447"/>
    </location>
</feature>
<feature type="modified residue" description="Phosphoserine" evidence="8">
    <location>
        <position position="21"/>
    </location>
</feature>
<feature type="glycosylation site" description="N-linked (GlcNAc...) asparagine" evidence="2">
    <location>
        <position position="84"/>
    </location>
</feature>
<proteinExistence type="evidence at protein level"/>
<evidence type="ECO:0000250" key="1">
    <source>
        <dbReference type="UniProtKB" id="Q9BZD2"/>
    </source>
</evidence>
<evidence type="ECO:0000255" key="2"/>
<evidence type="ECO:0000269" key="3">
    <source>
    </source>
</evidence>
<evidence type="ECO:0000269" key="4">
    <source>
    </source>
</evidence>
<evidence type="ECO:0000303" key="5">
    <source>
    </source>
</evidence>
<evidence type="ECO:0000305" key="6"/>
<evidence type="ECO:0000312" key="7">
    <source>
        <dbReference type="MGI" id="MGI:1918529"/>
    </source>
</evidence>
<evidence type="ECO:0007744" key="8">
    <source>
    </source>
</evidence>